<gene>
    <name evidence="1" type="primary">nuoN</name>
    <name type="ordered locus">Csal_3120</name>
</gene>
<accession>Q1QSU4</accession>
<evidence type="ECO:0000255" key="1">
    <source>
        <dbReference type="HAMAP-Rule" id="MF_00445"/>
    </source>
</evidence>
<dbReference type="EC" id="7.1.1.-" evidence="1"/>
<dbReference type="EMBL" id="CP000285">
    <property type="protein sequence ID" value="ABE60464.1"/>
    <property type="molecule type" value="Genomic_DNA"/>
</dbReference>
<dbReference type="RefSeq" id="WP_011508410.1">
    <property type="nucleotide sequence ID" value="NC_007963.1"/>
</dbReference>
<dbReference type="SMR" id="Q1QSU4"/>
<dbReference type="STRING" id="290398.Csal_3120"/>
<dbReference type="GeneID" id="95335815"/>
<dbReference type="KEGG" id="csa:Csal_3120"/>
<dbReference type="eggNOG" id="COG1007">
    <property type="taxonomic scope" value="Bacteria"/>
</dbReference>
<dbReference type="HOGENOM" id="CLU_007100_1_5_6"/>
<dbReference type="OrthoDB" id="9768329at2"/>
<dbReference type="Proteomes" id="UP000000239">
    <property type="component" value="Chromosome"/>
</dbReference>
<dbReference type="GO" id="GO:0005886">
    <property type="term" value="C:plasma membrane"/>
    <property type="evidence" value="ECO:0007669"/>
    <property type="project" value="UniProtKB-SubCell"/>
</dbReference>
<dbReference type="GO" id="GO:0008137">
    <property type="term" value="F:NADH dehydrogenase (ubiquinone) activity"/>
    <property type="evidence" value="ECO:0007669"/>
    <property type="project" value="InterPro"/>
</dbReference>
<dbReference type="GO" id="GO:0050136">
    <property type="term" value="F:NADH:ubiquinone reductase (non-electrogenic) activity"/>
    <property type="evidence" value="ECO:0007669"/>
    <property type="project" value="UniProtKB-UniRule"/>
</dbReference>
<dbReference type="GO" id="GO:0048038">
    <property type="term" value="F:quinone binding"/>
    <property type="evidence" value="ECO:0007669"/>
    <property type="project" value="UniProtKB-KW"/>
</dbReference>
<dbReference type="GO" id="GO:0042773">
    <property type="term" value="P:ATP synthesis coupled electron transport"/>
    <property type="evidence" value="ECO:0007669"/>
    <property type="project" value="InterPro"/>
</dbReference>
<dbReference type="HAMAP" id="MF_00445">
    <property type="entry name" value="NDH1_NuoN_1"/>
    <property type="match status" value="1"/>
</dbReference>
<dbReference type="InterPro" id="IPR010096">
    <property type="entry name" value="NADH-Q_OxRdtase_suN/2"/>
</dbReference>
<dbReference type="InterPro" id="IPR001750">
    <property type="entry name" value="ND/Mrp_TM"/>
</dbReference>
<dbReference type="NCBIfam" id="TIGR01770">
    <property type="entry name" value="NDH_I_N"/>
    <property type="match status" value="1"/>
</dbReference>
<dbReference type="NCBIfam" id="NF004439">
    <property type="entry name" value="PRK05777.1-1"/>
    <property type="match status" value="1"/>
</dbReference>
<dbReference type="PANTHER" id="PTHR22773">
    <property type="entry name" value="NADH DEHYDROGENASE"/>
    <property type="match status" value="1"/>
</dbReference>
<dbReference type="Pfam" id="PF00361">
    <property type="entry name" value="Proton_antipo_M"/>
    <property type="match status" value="1"/>
</dbReference>
<sequence>MTSLLALSPLILVCATAIVVMLTIAWRRHHELTATLTVVGLNLALAAQVVAWWQAPVSVTPLMTVDGLAVFGGVLILIATLACATLGHAYLEGAQGPREEYYLLLLCAAAGGLALVSSRHLAALFFGLELLSMPLYGMLAYTYRERGALEAGIKYMVLSAAASAFLLFGMALLYSRTGHLDFAGLGEALATAGGDGWLMAGMGMMLIGLGFKLSIVPFHLWTPDVYEGSPAPAATFLASASKVAVLLVLLRLLQSSPVQDAWLHSLLAVLAFVTMLVGNLLALTQNDLKRLLGYSSIAHFGYLLVALVVNDGLAAETAALYLVTYVLTTLGAFGVVTLLSSPYSGADASQLHHYRGLFWRRPYLTAVLTVMMLSLAGIPFTAGFIGKFYIVAVGVEASRWWLVGGVVAGSAIGLYYYLRVMVTLFLPEPGMQRRDATTDWAQRAGGVVVLGLAALVVVLGVYPAPMIDWVRFMVAG</sequence>
<protein>
    <recommendedName>
        <fullName evidence="1">NADH-quinone oxidoreductase subunit N</fullName>
        <ecNumber evidence="1">7.1.1.-</ecNumber>
    </recommendedName>
    <alternativeName>
        <fullName evidence="1">NADH dehydrogenase I subunit N</fullName>
    </alternativeName>
    <alternativeName>
        <fullName evidence="1">NDH-1 subunit N</fullName>
    </alternativeName>
</protein>
<comment type="function">
    <text evidence="1">NDH-1 shuttles electrons from NADH, via FMN and iron-sulfur (Fe-S) centers, to quinones in the respiratory chain. The immediate electron acceptor for the enzyme in this species is believed to be ubiquinone. Couples the redox reaction to proton translocation (for every two electrons transferred, four hydrogen ions are translocated across the cytoplasmic membrane), and thus conserves the redox energy in a proton gradient.</text>
</comment>
<comment type="catalytic activity">
    <reaction evidence="1">
        <text>a quinone + NADH + 5 H(+)(in) = a quinol + NAD(+) + 4 H(+)(out)</text>
        <dbReference type="Rhea" id="RHEA:57888"/>
        <dbReference type="ChEBI" id="CHEBI:15378"/>
        <dbReference type="ChEBI" id="CHEBI:24646"/>
        <dbReference type="ChEBI" id="CHEBI:57540"/>
        <dbReference type="ChEBI" id="CHEBI:57945"/>
        <dbReference type="ChEBI" id="CHEBI:132124"/>
    </reaction>
</comment>
<comment type="subunit">
    <text evidence="1">NDH-1 is composed of 14 different subunits. Subunits NuoA, H, J, K, L, M, N constitute the membrane sector of the complex.</text>
</comment>
<comment type="subcellular location">
    <subcellularLocation>
        <location evidence="1">Cell inner membrane</location>
        <topology evidence="1">Multi-pass membrane protein</topology>
    </subcellularLocation>
</comment>
<comment type="similarity">
    <text evidence="1">Belongs to the complex I subunit 2 family.</text>
</comment>
<keyword id="KW-0997">Cell inner membrane</keyword>
<keyword id="KW-1003">Cell membrane</keyword>
<keyword id="KW-0472">Membrane</keyword>
<keyword id="KW-0520">NAD</keyword>
<keyword id="KW-0874">Quinone</keyword>
<keyword id="KW-1185">Reference proteome</keyword>
<keyword id="KW-1278">Translocase</keyword>
<keyword id="KW-0812">Transmembrane</keyword>
<keyword id="KW-1133">Transmembrane helix</keyword>
<keyword id="KW-0813">Transport</keyword>
<keyword id="KW-0830">Ubiquinone</keyword>
<organism>
    <name type="scientific">Chromohalobacter salexigens (strain ATCC BAA-138 / DSM 3043 / CIP 106854 / NCIMB 13768 / 1H11)</name>
    <dbReference type="NCBI Taxonomy" id="290398"/>
    <lineage>
        <taxon>Bacteria</taxon>
        <taxon>Pseudomonadati</taxon>
        <taxon>Pseudomonadota</taxon>
        <taxon>Gammaproteobacteria</taxon>
        <taxon>Oceanospirillales</taxon>
        <taxon>Halomonadaceae</taxon>
        <taxon>Chromohalobacter</taxon>
    </lineage>
</organism>
<name>NUON_CHRSD</name>
<feature type="chain" id="PRO_5000113005" description="NADH-quinone oxidoreductase subunit N">
    <location>
        <begin position="1"/>
        <end position="476"/>
    </location>
</feature>
<feature type="transmembrane region" description="Helical" evidence="1">
    <location>
        <begin position="4"/>
        <end position="24"/>
    </location>
</feature>
<feature type="transmembrane region" description="Helical" evidence="1">
    <location>
        <begin position="32"/>
        <end position="52"/>
    </location>
</feature>
<feature type="transmembrane region" description="Helical" evidence="1">
    <location>
        <begin position="67"/>
        <end position="87"/>
    </location>
</feature>
<feature type="transmembrane region" description="Helical" evidence="1">
    <location>
        <begin position="100"/>
        <end position="117"/>
    </location>
</feature>
<feature type="transmembrane region" description="Helical" evidence="1">
    <location>
        <begin position="121"/>
        <end position="141"/>
    </location>
</feature>
<feature type="transmembrane region" description="Helical" evidence="1">
    <location>
        <begin position="155"/>
        <end position="175"/>
    </location>
</feature>
<feature type="transmembrane region" description="Helical" evidence="1">
    <location>
        <begin position="198"/>
        <end position="218"/>
    </location>
</feature>
<feature type="transmembrane region" description="Helical" evidence="1">
    <location>
        <begin position="230"/>
        <end position="250"/>
    </location>
</feature>
<feature type="transmembrane region" description="Helical" evidence="1">
    <location>
        <begin position="263"/>
        <end position="283"/>
    </location>
</feature>
<feature type="transmembrane region" description="Helical" evidence="1">
    <location>
        <begin position="291"/>
        <end position="311"/>
    </location>
</feature>
<feature type="transmembrane region" description="Helical" evidence="1">
    <location>
        <begin position="319"/>
        <end position="339"/>
    </location>
</feature>
<feature type="transmembrane region" description="Helical" evidence="1">
    <location>
        <begin position="366"/>
        <end position="386"/>
    </location>
</feature>
<feature type="transmembrane region" description="Helical" evidence="1">
    <location>
        <begin position="406"/>
        <end position="426"/>
    </location>
</feature>
<feature type="transmembrane region" description="Helical" evidence="1">
    <location>
        <begin position="447"/>
        <end position="467"/>
    </location>
</feature>
<reference key="1">
    <citation type="journal article" date="2011" name="Stand. Genomic Sci.">
        <title>Complete genome sequence of the halophilic and highly halotolerant Chromohalobacter salexigens type strain (1H11(T)).</title>
        <authorList>
            <person name="Copeland A."/>
            <person name="O'Connor K."/>
            <person name="Lucas S."/>
            <person name="Lapidus A."/>
            <person name="Berry K.W."/>
            <person name="Detter J.C."/>
            <person name="Del Rio T.G."/>
            <person name="Hammon N."/>
            <person name="Dalin E."/>
            <person name="Tice H."/>
            <person name="Pitluck S."/>
            <person name="Bruce D."/>
            <person name="Goodwin L."/>
            <person name="Han C."/>
            <person name="Tapia R."/>
            <person name="Saunders E."/>
            <person name="Schmutz J."/>
            <person name="Brettin T."/>
            <person name="Larimer F."/>
            <person name="Land M."/>
            <person name="Hauser L."/>
            <person name="Vargas C."/>
            <person name="Nieto J.J."/>
            <person name="Kyrpides N.C."/>
            <person name="Ivanova N."/>
            <person name="Goker M."/>
            <person name="Klenk H.P."/>
            <person name="Csonka L.N."/>
            <person name="Woyke T."/>
        </authorList>
    </citation>
    <scope>NUCLEOTIDE SEQUENCE [LARGE SCALE GENOMIC DNA]</scope>
    <source>
        <strain>ATCC BAA-138 / DSM 3043 / CIP 106854 / NCIMB 13768 / 1H11</strain>
    </source>
</reference>
<proteinExistence type="inferred from homology"/>